<organism>
    <name type="scientific">Gallus gallus</name>
    <name type="common">Chicken</name>
    <dbReference type="NCBI Taxonomy" id="9031"/>
    <lineage>
        <taxon>Eukaryota</taxon>
        <taxon>Metazoa</taxon>
        <taxon>Chordata</taxon>
        <taxon>Craniata</taxon>
        <taxon>Vertebrata</taxon>
        <taxon>Euteleostomi</taxon>
        <taxon>Archelosauria</taxon>
        <taxon>Archosauria</taxon>
        <taxon>Dinosauria</taxon>
        <taxon>Saurischia</taxon>
        <taxon>Theropoda</taxon>
        <taxon>Coelurosauria</taxon>
        <taxon>Aves</taxon>
        <taxon>Neognathae</taxon>
        <taxon>Galloanserae</taxon>
        <taxon>Galliformes</taxon>
        <taxon>Phasianidae</taxon>
        <taxon>Phasianinae</taxon>
        <taxon>Gallus</taxon>
    </lineage>
</organism>
<evidence type="ECO:0000250" key="1"/>
<evidence type="ECO:0000250" key="2">
    <source>
        <dbReference type="UniProtKB" id="Q5SUA5"/>
    </source>
</evidence>
<evidence type="ECO:0000255" key="3">
    <source>
        <dbReference type="PROSITE-ProRule" id="PRU00782"/>
    </source>
</evidence>
<evidence type="ECO:0000255" key="4">
    <source>
        <dbReference type="PROSITE-ProRule" id="PRU01093"/>
    </source>
</evidence>
<evidence type="ECO:0000305" key="5"/>
<protein>
    <recommendedName>
        <fullName>Unconventional myosin-Ig</fullName>
    </recommendedName>
</protein>
<comment type="function">
    <text evidence="2">Unconventional myosin required during immune response for detection of rare antigen-presenting cells by regulating T-cell migration. Unconventional myosins are actin-based motor molecules with ATPase activity and serve in intracellular movements. Acts as a regulator of T-cell migration by generating membrane tension, enforcing cell-intrinsic meandering search, thereby enhancing detection of rare antigens during lymph-node surveillance, enabling pathogen eradication.</text>
</comment>
<comment type="subunit">
    <text evidence="1">Interacts with calmodulin; via its IQ motifs.</text>
</comment>
<comment type="subcellular location">
    <subcellularLocation>
        <location evidence="2">Cell membrane</location>
        <topology evidence="2">Peripheral membrane protein</topology>
    </subcellularLocation>
    <subcellularLocation>
        <location evidence="2">Cell projection</location>
        <location evidence="2">Phagocytic cup</location>
    </subcellularLocation>
</comment>
<comment type="similarity">
    <text evidence="5">Belongs to the TRAFAC class myosin-kinesin ATPase superfamily. Myosin family.</text>
</comment>
<comment type="caution">
    <text evidence="5">Represents an unconventional myosin. This protein should not be confused with the conventional myosin-1 (MYH1).</text>
</comment>
<name>MYO1G_CHICK</name>
<dbReference type="EMBL" id="AJ719462">
    <property type="protein sequence ID" value="CAG31121.1"/>
    <property type="molecule type" value="mRNA"/>
</dbReference>
<dbReference type="RefSeq" id="NP_001026132.1">
    <property type="nucleotide sequence ID" value="NM_001030961.1"/>
</dbReference>
<dbReference type="SMR" id="Q5ZMC2"/>
<dbReference type="FunCoup" id="Q5ZMC2">
    <property type="interactions" value="100"/>
</dbReference>
<dbReference type="PaxDb" id="9031-ENSGALP00000009037"/>
<dbReference type="GeneID" id="420412"/>
<dbReference type="KEGG" id="gga:420412"/>
<dbReference type="CTD" id="64005"/>
<dbReference type="VEuPathDB" id="HostDB:geneid_420412"/>
<dbReference type="eggNOG" id="KOG0164">
    <property type="taxonomic scope" value="Eukaryota"/>
</dbReference>
<dbReference type="InParanoid" id="Q5ZMC2"/>
<dbReference type="OrthoDB" id="6108017at2759"/>
<dbReference type="PhylomeDB" id="Q5ZMC2"/>
<dbReference type="PRO" id="PR:Q5ZMC2"/>
<dbReference type="Proteomes" id="UP000000539">
    <property type="component" value="Unassembled WGS sequence"/>
</dbReference>
<dbReference type="GO" id="GO:0015629">
    <property type="term" value="C:actin cytoskeleton"/>
    <property type="evidence" value="ECO:0000318"/>
    <property type="project" value="GO_Central"/>
</dbReference>
<dbReference type="GO" id="GO:0005737">
    <property type="term" value="C:cytoplasm"/>
    <property type="evidence" value="ECO:0000318"/>
    <property type="project" value="GO_Central"/>
</dbReference>
<dbReference type="GO" id="GO:0005902">
    <property type="term" value="C:microvillus"/>
    <property type="evidence" value="ECO:0000318"/>
    <property type="project" value="GO_Central"/>
</dbReference>
<dbReference type="GO" id="GO:0016459">
    <property type="term" value="C:myosin complex"/>
    <property type="evidence" value="ECO:0007669"/>
    <property type="project" value="UniProtKB-KW"/>
</dbReference>
<dbReference type="GO" id="GO:0001891">
    <property type="term" value="C:phagocytic cup"/>
    <property type="evidence" value="ECO:0000250"/>
    <property type="project" value="UniProtKB"/>
</dbReference>
<dbReference type="GO" id="GO:0005886">
    <property type="term" value="C:plasma membrane"/>
    <property type="evidence" value="ECO:0000250"/>
    <property type="project" value="UniProtKB"/>
</dbReference>
<dbReference type="GO" id="GO:0051015">
    <property type="term" value="F:actin filament binding"/>
    <property type="evidence" value="ECO:0000318"/>
    <property type="project" value="GO_Central"/>
</dbReference>
<dbReference type="GO" id="GO:0005524">
    <property type="term" value="F:ATP binding"/>
    <property type="evidence" value="ECO:0007669"/>
    <property type="project" value="UniProtKB-KW"/>
</dbReference>
<dbReference type="GO" id="GO:0005516">
    <property type="term" value="F:calmodulin binding"/>
    <property type="evidence" value="ECO:0007669"/>
    <property type="project" value="UniProtKB-KW"/>
</dbReference>
<dbReference type="GO" id="GO:0000146">
    <property type="term" value="F:microfilament motor activity"/>
    <property type="evidence" value="ECO:0000318"/>
    <property type="project" value="GO_Central"/>
</dbReference>
<dbReference type="GO" id="GO:0005547">
    <property type="term" value="F:phosphatidylinositol-3,4,5-trisphosphate binding"/>
    <property type="evidence" value="ECO:0000250"/>
    <property type="project" value="UniProtKB"/>
</dbReference>
<dbReference type="GO" id="GO:0043325">
    <property type="term" value="F:phosphatidylinositol-3,4-bisphosphate binding"/>
    <property type="evidence" value="ECO:0000250"/>
    <property type="project" value="UniProtKB"/>
</dbReference>
<dbReference type="GO" id="GO:0005546">
    <property type="term" value="F:phosphatidylinositol-4,5-bisphosphate binding"/>
    <property type="evidence" value="ECO:0000250"/>
    <property type="project" value="UniProtKB"/>
</dbReference>
<dbReference type="GO" id="GO:0007015">
    <property type="term" value="P:actin filament organization"/>
    <property type="evidence" value="ECO:0000318"/>
    <property type="project" value="GO_Central"/>
</dbReference>
<dbReference type="GO" id="GO:0030048">
    <property type="term" value="P:actin filament-based movement"/>
    <property type="evidence" value="ECO:0000318"/>
    <property type="project" value="GO_Central"/>
</dbReference>
<dbReference type="GO" id="GO:0006897">
    <property type="term" value="P:endocytosis"/>
    <property type="evidence" value="ECO:0000318"/>
    <property type="project" value="GO_Central"/>
</dbReference>
<dbReference type="GO" id="GO:0038096">
    <property type="term" value="P:Fc-gamma receptor signaling pathway involved in phagocytosis"/>
    <property type="evidence" value="ECO:0000250"/>
    <property type="project" value="UniProtKB"/>
</dbReference>
<dbReference type="GO" id="GO:0002456">
    <property type="term" value="P:T cell mediated immunity"/>
    <property type="evidence" value="ECO:0000250"/>
    <property type="project" value="UniProtKB"/>
</dbReference>
<dbReference type="GO" id="GO:0072678">
    <property type="term" value="P:T cell migration"/>
    <property type="evidence" value="ECO:0000250"/>
    <property type="project" value="UniProtKB"/>
</dbReference>
<dbReference type="CDD" id="cd01378">
    <property type="entry name" value="MYSc_Myo1"/>
    <property type="match status" value="1"/>
</dbReference>
<dbReference type="FunFam" id="1.10.10.820:FF:000001">
    <property type="entry name" value="Myosin heavy chain"/>
    <property type="match status" value="1"/>
</dbReference>
<dbReference type="FunFam" id="1.20.5.4820:FF:000003">
    <property type="entry name" value="Unconventional myosin ID"/>
    <property type="match status" value="1"/>
</dbReference>
<dbReference type="FunFam" id="1.20.58.530:FF:000004">
    <property type="entry name" value="Unconventional myosin ID"/>
    <property type="match status" value="1"/>
</dbReference>
<dbReference type="Gene3D" id="1.10.10.820">
    <property type="match status" value="1"/>
</dbReference>
<dbReference type="Gene3D" id="1.20.5.4820">
    <property type="match status" value="1"/>
</dbReference>
<dbReference type="Gene3D" id="1.20.58.530">
    <property type="match status" value="1"/>
</dbReference>
<dbReference type="Gene3D" id="3.40.850.10">
    <property type="entry name" value="Kinesin motor domain"/>
    <property type="match status" value="1"/>
</dbReference>
<dbReference type="Gene3D" id="1.20.120.720">
    <property type="entry name" value="Myosin VI head, motor domain, U50 subdomain"/>
    <property type="match status" value="1"/>
</dbReference>
<dbReference type="InterPro" id="IPR036961">
    <property type="entry name" value="Kinesin_motor_dom_sf"/>
</dbReference>
<dbReference type="InterPro" id="IPR001609">
    <property type="entry name" value="Myosin_head_motor_dom-like"/>
</dbReference>
<dbReference type="InterPro" id="IPR010926">
    <property type="entry name" value="Myosin_TH1"/>
</dbReference>
<dbReference type="InterPro" id="IPR036072">
    <property type="entry name" value="MYSc_Myo1"/>
</dbReference>
<dbReference type="InterPro" id="IPR027417">
    <property type="entry name" value="P-loop_NTPase"/>
</dbReference>
<dbReference type="PANTHER" id="PTHR13140">
    <property type="entry name" value="MYOSIN"/>
    <property type="match status" value="1"/>
</dbReference>
<dbReference type="PANTHER" id="PTHR13140:SF381">
    <property type="entry name" value="UNCONVENTIONAL MYOSIN-IG"/>
    <property type="match status" value="1"/>
</dbReference>
<dbReference type="Pfam" id="PF00063">
    <property type="entry name" value="Myosin_head"/>
    <property type="match status" value="1"/>
</dbReference>
<dbReference type="Pfam" id="PF06017">
    <property type="entry name" value="Myosin_TH1"/>
    <property type="match status" value="1"/>
</dbReference>
<dbReference type="PRINTS" id="PR00193">
    <property type="entry name" value="MYOSINHEAVY"/>
</dbReference>
<dbReference type="SMART" id="SM00242">
    <property type="entry name" value="MYSc"/>
    <property type="match status" value="1"/>
</dbReference>
<dbReference type="SUPFAM" id="SSF52540">
    <property type="entry name" value="P-loop containing nucleoside triphosphate hydrolases"/>
    <property type="match status" value="1"/>
</dbReference>
<dbReference type="PROSITE" id="PS51456">
    <property type="entry name" value="MYOSIN_MOTOR"/>
    <property type="match status" value="1"/>
</dbReference>
<dbReference type="PROSITE" id="PS51757">
    <property type="entry name" value="TH1"/>
    <property type="match status" value="1"/>
</dbReference>
<reference key="1">
    <citation type="journal article" date="2005" name="Genome Biol.">
        <title>Full-length cDNAs from chicken bursal lymphocytes to facilitate gene function analysis.</title>
        <authorList>
            <person name="Caldwell R.B."/>
            <person name="Kierzek A.M."/>
            <person name="Arakawa H."/>
            <person name="Bezzubov Y."/>
            <person name="Zaim J."/>
            <person name="Fiedler P."/>
            <person name="Kutter S."/>
            <person name="Blagodatski A."/>
            <person name="Kostovska D."/>
            <person name="Koter M."/>
            <person name="Plachy J."/>
            <person name="Carninci P."/>
            <person name="Hayashizaki Y."/>
            <person name="Buerstedde J.-M."/>
        </authorList>
    </citation>
    <scope>NUCLEOTIDE SEQUENCE [LARGE SCALE MRNA]</scope>
    <source>
        <strain>CB</strain>
        <tissue>Bursa of Fabricius</tissue>
    </source>
</reference>
<feature type="chain" id="PRO_0000340319" description="Unconventional myosin-Ig">
    <location>
        <begin position="1"/>
        <end position="1007"/>
    </location>
</feature>
<feature type="domain" description="Myosin motor" evidence="3">
    <location>
        <begin position="9"/>
        <end position="696"/>
    </location>
</feature>
<feature type="domain" description="IQ">
    <location>
        <begin position="699"/>
        <end position="728"/>
    </location>
</feature>
<feature type="domain" description="TH1" evidence="4">
    <location>
        <begin position="813"/>
        <end position="1006"/>
    </location>
</feature>
<feature type="region of interest" description="Actin-binding" evidence="3">
    <location>
        <begin position="573"/>
        <end position="595"/>
    </location>
</feature>
<feature type="binding site" evidence="1">
    <location>
        <begin position="102"/>
        <end position="109"/>
    </location>
    <ligand>
        <name>ATP</name>
        <dbReference type="ChEBI" id="CHEBI:30616"/>
    </ligand>
</feature>
<sequence>MTELEGPEFGKADFVLLDEVTMEHFMENLRLRFSKGRIYTYIGEVVVAMNPYQPLELYGPSVVEQYRGRELYERPPHLFALADAAYKAMKRRAKDTCIVISGESGAGKTEASKYIMQYIAAITNPTQRAEVERVKNGLLKSNCVLEAFGNAKTNRNDNSSRFGKYMDINFDFKGDPTGGHIYNYLLEKSRVLQQQPGERNFHSFYQLLLGAPDALLASLHLQRDPTAYCYTQQGTQGSAGGDDARGYRAVEEAMAVIGFTPEEVGAVQRILAAILHLGNVQFVAEGEVAALEAVEQLAVLAQLTGTTPEQLRQALLARTVATGGGELIEKGHSPTEAAYGRDACAKAIYERLFGWIVGRINASITARGYDVRQHGKSTVIGVLDIYGFEIFDTNSFEQFCINYCNEKLQQLFIELILRQEQAEYQREGITWQNIEYFSNEPIVELVEQPHRGILALLDEACLAVGTVTDALFLANMDARLGHHPHYSSRKLCPTDKTMEFDRDFRIKHYAGDVTYSVEGFLDKNKDTLFQDFKRLLYNSMDPVLRAMWPDGEQSITEVTKRPLTAATLFKNSIVALVENLASKEPYYVRCIKPNDQKSPVLFDEERCRHQVAYLGLLENVRVLRAGFAYRQPYDRFLQRYKMTCEYTWPNHLMATDREATQTLLEQHGFQDDVAYGHTKVFIRTPRTLFCLEQERAQLIPIIVLLLQKAWRGALARRWCRYLRAAYAIMGYYKRHKVKAYLLELIRRFQGVRSMPDFGKSLAWPEPPAVLSRFQENSQQLFRRWRARQIVKNIPPSDMAQIRAKVAAMGALHGLRKDWGCQRGWVRDYLSSASENPGLALPFAHRVQALRDKVHFGAVLFSSHVRKINRFNKSRDRAILITDQHLYKLEPRKQYRVMRELPLSMVTGLSVTSCRAQLVVFHTQNHDDLAVCLHKTQPRGDERVGELVGVLLEHCRTTKRELQVHVSDRIQLSLRGRKRLLTVETQPDVAAPDFRKSRDGFVLYWPGS</sequence>
<gene>
    <name type="primary">MYO1G</name>
    <name type="ORF">RCJMB04_2i22</name>
</gene>
<accession>Q5ZMC2</accession>
<keyword id="KW-0009">Actin-binding</keyword>
<keyword id="KW-1064">Adaptive immunity</keyword>
<keyword id="KW-0067">ATP-binding</keyword>
<keyword id="KW-0112">Calmodulin-binding</keyword>
<keyword id="KW-1003">Cell membrane</keyword>
<keyword id="KW-0966">Cell projection</keyword>
<keyword id="KW-0391">Immunity</keyword>
<keyword id="KW-0446">Lipid-binding</keyword>
<keyword id="KW-0472">Membrane</keyword>
<keyword id="KW-0505">Motor protein</keyword>
<keyword id="KW-0518">Myosin</keyword>
<keyword id="KW-0547">Nucleotide-binding</keyword>
<keyword id="KW-1185">Reference proteome</keyword>
<proteinExistence type="evidence at transcript level"/>